<name>RL4_CAMHC</name>
<evidence type="ECO:0000255" key="1">
    <source>
        <dbReference type="HAMAP-Rule" id="MF_01328"/>
    </source>
</evidence>
<evidence type="ECO:0000256" key="2">
    <source>
        <dbReference type="SAM" id="MobiDB-lite"/>
    </source>
</evidence>
<evidence type="ECO:0000305" key="3"/>
<comment type="function">
    <text evidence="1">One of the primary rRNA binding proteins, this protein initially binds near the 5'-end of the 23S rRNA. It is important during the early stages of 50S assembly. It makes multiple contacts with different domains of the 23S rRNA in the assembled 50S subunit and ribosome.</text>
</comment>
<comment type="function">
    <text evidence="1">Forms part of the polypeptide exit tunnel.</text>
</comment>
<comment type="subunit">
    <text evidence="1">Part of the 50S ribosomal subunit.</text>
</comment>
<comment type="similarity">
    <text evidence="1">Belongs to the universal ribosomal protein uL4 family.</text>
</comment>
<dbReference type="EMBL" id="CP000776">
    <property type="protein sequence ID" value="ABS51910.1"/>
    <property type="molecule type" value="Genomic_DNA"/>
</dbReference>
<dbReference type="RefSeq" id="WP_011991545.1">
    <property type="nucleotide sequence ID" value="NC_009714.1"/>
</dbReference>
<dbReference type="SMR" id="A7HZK7"/>
<dbReference type="STRING" id="360107.CHAB381_0085"/>
<dbReference type="KEGG" id="cha:CHAB381_0085"/>
<dbReference type="eggNOG" id="COG0088">
    <property type="taxonomic scope" value="Bacteria"/>
</dbReference>
<dbReference type="HOGENOM" id="CLU_041575_5_2_7"/>
<dbReference type="OrthoDB" id="9803201at2"/>
<dbReference type="Proteomes" id="UP000002407">
    <property type="component" value="Chromosome"/>
</dbReference>
<dbReference type="GO" id="GO:1990904">
    <property type="term" value="C:ribonucleoprotein complex"/>
    <property type="evidence" value="ECO:0007669"/>
    <property type="project" value="UniProtKB-KW"/>
</dbReference>
<dbReference type="GO" id="GO:0005840">
    <property type="term" value="C:ribosome"/>
    <property type="evidence" value="ECO:0007669"/>
    <property type="project" value="UniProtKB-KW"/>
</dbReference>
<dbReference type="GO" id="GO:0019843">
    <property type="term" value="F:rRNA binding"/>
    <property type="evidence" value="ECO:0007669"/>
    <property type="project" value="UniProtKB-UniRule"/>
</dbReference>
<dbReference type="GO" id="GO:0003735">
    <property type="term" value="F:structural constituent of ribosome"/>
    <property type="evidence" value="ECO:0007669"/>
    <property type="project" value="InterPro"/>
</dbReference>
<dbReference type="GO" id="GO:0006412">
    <property type="term" value="P:translation"/>
    <property type="evidence" value="ECO:0007669"/>
    <property type="project" value="UniProtKB-UniRule"/>
</dbReference>
<dbReference type="FunFam" id="3.40.1370.10:FF:000008">
    <property type="entry name" value="50S ribosomal protein L4"/>
    <property type="match status" value="1"/>
</dbReference>
<dbReference type="Gene3D" id="3.40.1370.10">
    <property type="match status" value="1"/>
</dbReference>
<dbReference type="HAMAP" id="MF_01328_B">
    <property type="entry name" value="Ribosomal_uL4_B"/>
    <property type="match status" value="1"/>
</dbReference>
<dbReference type="InterPro" id="IPR002136">
    <property type="entry name" value="Ribosomal_uL4"/>
</dbReference>
<dbReference type="InterPro" id="IPR013005">
    <property type="entry name" value="Ribosomal_uL4-like"/>
</dbReference>
<dbReference type="InterPro" id="IPR023574">
    <property type="entry name" value="Ribosomal_uL4_dom_sf"/>
</dbReference>
<dbReference type="NCBIfam" id="TIGR03953">
    <property type="entry name" value="rplD_bact"/>
    <property type="match status" value="1"/>
</dbReference>
<dbReference type="PANTHER" id="PTHR10746">
    <property type="entry name" value="50S RIBOSOMAL PROTEIN L4"/>
    <property type="match status" value="1"/>
</dbReference>
<dbReference type="PANTHER" id="PTHR10746:SF6">
    <property type="entry name" value="LARGE RIBOSOMAL SUBUNIT PROTEIN UL4M"/>
    <property type="match status" value="1"/>
</dbReference>
<dbReference type="Pfam" id="PF00573">
    <property type="entry name" value="Ribosomal_L4"/>
    <property type="match status" value="1"/>
</dbReference>
<dbReference type="SUPFAM" id="SSF52166">
    <property type="entry name" value="Ribosomal protein L4"/>
    <property type="match status" value="1"/>
</dbReference>
<proteinExistence type="inferred from homology"/>
<feature type="chain" id="PRO_1000052376" description="Large ribosomal subunit protein uL4">
    <location>
        <begin position="1"/>
        <end position="204"/>
    </location>
</feature>
<feature type="region of interest" description="Disordered" evidence="2">
    <location>
        <begin position="49"/>
        <end position="75"/>
    </location>
</feature>
<protein>
    <recommendedName>
        <fullName evidence="1">Large ribosomal subunit protein uL4</fullName>
    </recommendedName>
    <alternativeName>
        <fullName evidence="3">50S ribosomal protein L4</fullName>
    </alternativeName>
</protein>
<sequence length="204" mass="22412">MSKVKVLNEKLEKASELELPANFADVNPHNLYLYVKSYLASLRANTANTKGRSEVSGGGKKPWRQKGRGGARAGSTRTNVWVGGAVAFGPTNNRNYFQKVNKKQKRLALEFALNEKAQNDKIFAVDSLEISSGKTKDAAKFIKNLGVRDALIVKNELDSATLLAYRNLNNCYVIDINELNAYLVAVYSAVIIETSALQSIVKEG</sequence>
<organism>
    <name type="scientific">Campylobacter hominis (strain ATCC BAA-381 / DSM 21671 / CCUG 45161 / LMG 19568 / NCTC 13146 / CH001A)</name>
    <dbReference type="NCBI Taxonomy" id="360107"/>
    <lineage>
        <taxon>Bacteria</taxon>
        <taxon>Pseudomonadati</taxon>
        <taxon>Campylobacterota</taxon>
        <taxon>Epsilonproteobacteria</taxon>
        <taxon>Campylobacterales</taxon>
        <taxon>Campylobacteraceae</taxon>
        <taxon>Campylobacter</taxon>
    </lineage>
</organism>
<accession>A7HZK7</accession>
<gene>
    <name evidence="1" type="primary">rplD</name>
    <name type="ordered locus">CHAB381_0085</name>
</gene>
<keyword id="KW-1185">Reference proteome</keyword>
<keyword id="KW-0687">Ribonucleoprotein</keyword>
<keyword id="KW-0689">Ribosomal protein</keyword>
<keyword id="KW-0694">RNA-binding</keyword>
<keyword id="KW-0699">rRNA-binding</keyword>
<reference key="1">
    <citation type="submission" date="2007-07" db="EMBL/GenBank/DDBJ databases">
        <title>Complete genome sequence of Campylobacter hominis ATCC BAA-381, a commensal isolated from the human gastrointestinal tract.</title>
        <authorList>
            <person name="Fouts D.E."/>
            <person name="Mongodin E.F."/>
            <person name="Puiu D."/>
            <person name="Sebastian Y."/>
            <person name="Miller W.G."/>
            <person name="Mandrell R.E."/>
            <person name="Nelson K.E."/>
        </authorList>
    </citation>
    <scope>NUCLEOTIDE SEQUENCE [LARGE SCALE GENOMIC DNA]</scope>
    <source>
        <strain>ATCC BAA-381 / DSM 21671 / CCUG 45161 / LMG 19568 / NCTC 13146 / CH001A</strain>
    </source>
</reference>